<proteinExistence type="evidence at protein level"/>
<name>ADRL_DROME</name>
<reference key="1">
    <citation type="journal article" date="2000" name="Science">
        <title>The genome sequence of Drosophila melanogaster.</title>
        <authorList>
            <person name="Adams M.D."/>
            <person name="Celniker S.E."/>
            <person name="Holt R.A."/>
            <person name="Evans C.A."/>
            <person name="Gocayne J.D."/>
            <person name="Amanatides P.G."/>
            <person name="Scherer S.E."/>
            <person name="Li P.W."/>
            <person name="Hoskins R.A."/>
            <person name="Galle R.F."/>
            <person name="George R.A."/>
            <person name="Lewis S.E."/>
            <person name="Richards S."/>
            <person name="Ashburner M."/>
            <person name="Henderson S.N."/>
            <person name="Sutton G.G."/>
            <person name="Wortman J.R."/>
            <person name="Yandell M.D."/>
            <person name="Zhang Q."/>
            <person name="Chen L.X."/>
            <person name="Brandon R.C."/>
            <person name="Rogers Y.-H.C."/>
            <person name="Blazej R.G."/>
            <person name="Champe M."/>
            <person name="Pfeiffer B.D."/>
            <person name="Wan K.H."/>
            <person name="Doyle C."/>
            <person name="Baxter E.G."/>
            <person name="Helt G."/>
            <person name="Nelson C.R."/>
            <person name="Miklos G.L.G."/>
            <person name="Abril J.F."/>
            <person name="Agbayani A."/>
            <person name="An H.-J."/>
            <person name="Andrews-Pfannkoch C."/>
            <person name="Baldwin D."/>
            <person name="Ballew R.M."/>
            <person name="Basu A."/>
            <person name="Baxendale J."/>
            <person name="Bayraktaroglu L."/>
            <person name="Beasley E.M."/>
            <person name="Beeson K.Y."/>
            <person name="Benos P.V."/>
            <person name="Berman B.P."/>
            <person name="Bhandari D."/>
            <person name="Bolshakov S."/>
            <person name="Borkova D."/>
            <person name="Botchan M.R."/>
            <person name="Bouck J."/>
            <person name="Brokstein P."/>
            <person name="Brottier P."/>
            <person name="Burtis K.C."/>
            <person name="Busam D.A."/>
            <person name="Butler H."/>
            <person name="Cadieu E."/>
            <person name="Center A."/>
            <person name="Chandra I."/>
            <person name="Cherry J.M."/>
            <person name="Cawley S."/>
            <person name="Dahlke C."/>
            <person name="Davenport L.B."/>
            <person name="Davies P."/>
            <person name="de Pablos B."/>
            <person name="Delcher A."/>
            <person name="Deng Z."/>
            <person name="Mays A.D."/>
            <person name="Dew I."/>
            <person name="Dietz S.M."/>
            <person name="Dodson K."/>
            <person name="Doup L.E."/>
            <person name="Downes M."/>
            <person name="Dugan-Rocha S."/>
            <person name="Dunkov B.C."/>
            <person name="Dunn P."/>
            <person name="Durbin K.J."/>
            <person name="Evangelista C.C."/>
            <person name="Ferraz C."/>
            <person name="Ferriera S."/>
            <person name="Fleischmann W."/>
            <person name="Fosler C."/>
            <person name="Gabrielian A.E."/>
            <person name="Garg N.S."/>
            <person name="Gelbart W.M."/>
            <person name="Glasser K."/>
            <person name="Glodek A."/>
            <person name="Gong F."/>
            <person name="Gorrell J.H."/>
            <person name="Gu Z."/>
            <person name="Guan P."/>
            <person name="Harris M."/>
            <person name="Harris N.L."/>
            <person name="Harvey D.A."/>
            <person name="Heiman T.J."/>
            <person name="Hernandez J.R."/>
            <person name="Houck J."/>
            <person name="Hostin D."/>
            <person name="Houston K.A."/>
            <person name="Howland T.J."/>
            <person name="Wei M.-H."/>
            <person name="Ibegwam C."/>
            <person name="Jalali M."/>
            <person name="Kalush F."/>
            <person name="Karpen G.H."/>
            <person name="Ke Z."/>
            <person name="Kennison J.A."/>
            <person name="Ketchum K.A."/>
            <person name="Kimmel B.E."/>
            <person name="Kodira C.D."/>
            <person name="Kraft C.L."/>
            <person name="Kravitz S."/>
            <person name="Kulp D."/>
            <person name="Lai Z."/>
            <person name="Lasko P."/>
            <person name="Lei Y."/>
            <person name="Levitsky A.A."/>
            <person name="Li J.H."/>
            <person name="Li Z."/>
            <person name="Liang Y."/>
            <person name="Lin X."/>
            <person name="Liu X."/>
            <person name="Mattei B."/>
            <person name="McIntosh T.C."/>
            <person name="McLeod M.P."/>
            <person name="McPherson D."/>
            <person name="Merkulov G."/>
            <person name="Milshina N.V."/>
            <person name="Mobarry C."/>
            <person name="Morris J."/>
            <person name="Moshrefi A."/>
            <person name="Mount S.M."/>
            <person name="Moy M."/>
            <person name="Murphy B."/>
            <person name="Murphy L."/>
            <person name="Muzny D.M."/>
            <person name="Nelson D.L."/>
            <person name="Nelson D.R."/>
            <person name="Nelson K.A."/>
            <person name="Nixon K."/>
            <person name="Nusskern D.R."/>
            <person name="Pacleb J.M."/>
            <person name="Palazzolo M."/>
            <person name="Pittman G.S."/>
            <person name="Pan S."/>
            <person name="Pollard J."/>
            <person name="Puri V."/>
            <person name="Reese M.G."/>
            <person name="Reinert K."/>
            <person name="Remington K."/>
            <person name="Saunders R.D.C."/>
            <person name="Scheeler F."/>
            <person name="Shen H."/>
            <person name="Shue B.C."/>
            <person name="Siden-Kiamos I."/>
            <person name="Simpson M."/>
            <person name="Skupski M.P."/>
            <person name="Smith T.J."/>
            <person name="Spier E."/>
            <person name="Spradling A.C."/>
            <person name="Stapleton M."/>
            <person name="Strong R."/>
            <person name="Sun E."/>
            <person name="Svirskas R."/>
            <person name="Tector C."/>
            <person name="Turner R."/>
            <person name="Venter E."/>
            <person name="Wang A.H."/>
            <person name="Wang X."/>
            <person name="Wang Z.-Y."/>
            <person name="Wassarman D.A."/>
            <person name="Weinstock G.M."/>
            <person name="Weissenbach J."/>
            <person name="Williams S.M."/>
            <person name="Woodage T."/>
            <person name="Worley K.C."/>
            <person name="Wu D."/>
            <person name="Yang S."/>
            <person name="Yao Q.A."/>
            <person name="Ye J."/>
            <person name="Yeh R.-F."/>
            <person name="Zaveri J.S."/>
            <person name="Zhan M."/>
            <person name="Zhang G."/>
            <person name="Zhao Q."/>
            <person name="Zheng L."/>
            <person name="Zheng X.H."/>
            <person name="Zhong F.N."/>
            <person name="Zhong W."/>
            <person name="Zhou X."/>
            <person name="Zhu S.C."/>
            <person name="Zhu X."/>
            <person name="Smith H.O."/>
            <person name="Gibbs R.A."/>
            <person name="Myers E.W."/>
            <person name="Rubin G.M."/>
            <person name="Venter J.C."/>
        </authorList>
    </citation>
    <scope>NUCLEOTIDE SEQUENCE [LARGE SCALE GENOMIC DNA]</scope>
    <source>
        <strain>Berkeley</strain>
    </source>
</reference>
<reference key="2">
    <citation type="journal article" date="2002" name="Genome Biol.">
        <title>Annotation of the Drosophila melanogaster euchromatic genome: a systematic review.</title>
        <authorList>
            <person name="Misra S."/>
            <person name="Crosby M.A."/>
            <person name="Mungall C.J."/>
            <person name="Matthews B.B."/>
            <person name="Campbell K.S."/>
            <person name="Hradecky P."/>
            <person name="Huang Y."/>
            <person name="Kaminker J.S."/>
            <person name="Millburn G.H."/>
            <person name="Prochnik S.E."/>
            <person name="Smith C.D."/>
            <person name="Tupy J.L."/>
            <person name="Whitfield E.J."/>
            <person name="Bayraktaroglu L."/>
            <person name="Berman B.P."/>
            <person name="Bettencourt B.R."/>
            <person name="Celniker S.E."/>
            <person name="de Grey A.D.N.J."/>
            <person name="Drysdale R.A."/>
            <person name="Harris N.L."/>
            <person name="Richter J."/>
            <person name="Russo S."/>
            <person name="Schroeder A.J."/>
            <person name="Shu S.Q."/>
            <person name="Stapleton M."/>
            <person name="Yamada C."/>
            <person name="Ashburner M."/>
            <person name="Gelbart W.M."/>
            <person name="Rubin G.M."/>
            <person name="Lewis S.E."/>
        </authorList>
    </citation>
    <scope>GENOME REANNOTATION</scope>
    <source>
        <strain>Berkeley</strain>
    </source>
</reference>
<reference key="3">
    <citation type="journal article" date="2002" name="Genome Biol.">
        <title>A Drosophila full-length cDNA resource.</title>
        <authorList>
            <person name="Stapleton M."/>
            <person name="Carlson J.W."/>
            <person name="Brokstein P."/>
            <person name="Yu C."/>
            <person name="Champe M."/>
            <person name="George R.A."/>
            <person name="Guarin H."/>
            <person name="Kronmiller B."/>
            <person name="Pacleb J.M."/>
            <person name="Park S."/>
            <person name="Wan K.H."/>
            <person name="Rubin G.M."/>
            <person name="Celniker S.E."/>
        </authorList>
    </citation>
    <scope>NUCLEOTIDE SEQUENCE [LARGE SCALE MRNA] (ISOFORM 1)</scope>
    <scope>NUCLEOTIDE SEQUENCE [LARGE SCALE MRNA] OF 1-283 (ISOFORM 2)</scope>
    <source>
        <strain>Berkeley</strain>
        <tissue>Embryo</tissue>
        <tissue>Head</tissue>
    </source>
</reference>
<reference key="4">
    <citation type="journal article" date="2013" name="PLoS ONE">
        <title>Drosophila adiponectin receptor in insulin producing cells regulates glucose and lipid metabolism by controlling insulin secretion.</title>
        <authorList>
            <person name="Kwak S.J."/>
            <person name="Hong S.H."/>
            <person name="Bajracharya R."/>
            <person name="Yang S.Y."/>
            <person name="Lee K.S."/>
            <person name="Yu K."/>
        </authorList>
    </citation>
    <scope>FUNCTION</scope>
    <scope>TISSUE SPECIFICITY</scope>
    <scope>DEVELOPMENTAL STAGE</scope>
</reference>
<gene>
    <name type="primary">AdipoR</name>
    <name type="ORF">CG5315</name>
</gene>
<dbReference type="EMBL" id="AE014297">
    <property type="protein sequence ID" value="AAF56016.2"/>
    <property type="molecule type" value="Genomic_DNA"/>
</dbReference>
<dbReference type="EMBL" id="AE014297">
    <property type="protein sequence ID" value="AAF56017.3"/>
    <property type="molecule type" value="Genomic_DNA"/>
</dbReference>
<dbReference type="EMBL" id="BI585801">
    <property type="status" value="NOT_ANNOTATED_CDS"/>
    <property type="molecule type" value="mRNA"/>
</dbReference>
<dbReference type="EMBL" id="BT001487">
    <property type="protein sequence ID" value="AAN71242.1"/>
    <property type="molecule type" value="mRNA"/>
</dbReference>
<dbReference type="RefSeq" id="NP_001247239.1">
    <molecule id="Q9VCY8-1"/>
    <property type="nucleotide sequence ID" value="NM_001260310.2"/>
</dbReference>
<dbReference type="RefSeq" id="NP_001262844.1">
    <molecule id="Q9VCY8-1"/>
    <property type="nucleotide sequence ID" value="NM_001275915.1"/>
</dbReference>
<dbReference type="RefSeq" id="NP_651061.1">
    <molecule id="Q9VCY8-1"/>
    <property type="nucleotide sequence ID" value="NM_142804.3"/>
</dbReference>
<dbReference type="RefSeq" id="NP_732758.1">
    <molecule id="Q9VCY8-1"/>
    <property type="nucleotide sequence ID" value="NM_170019.2"/>
</dbReference>
<dbReference type="RefSeq" id="NP_732759.2">
    <molecule id="Q9VCY8-2"/>
    <property type="nucleotide sequence ID" value="NM_170020.2"/>
</dbReference>
<dbReference type="SMR" id="Q9VCY8"/>
<dbReference type="BioGRID" id="67611">
    <property type="interactions" value="9"/>
</dbReference>
<dbReference type="FunCoup" id="Q9VCY8">
    <property type="interactions" value="974"/>
</dbReference>
<dbReference type="IntAct" id="Q9VCY8">
    <property type="interactions" value="5"/>
</dbReference>
<dbReference type="STRING" id="7227.FBpp0083675"/>
<dbReference type="PaxDb" id="7227-FBpp0083675"/>
<dbReference type="DNASU" id="42656"/>
<dbReference type="EnsemblMetazoa" id="FBtr0084282">
    <molecule id="Q9VCY8-1"/>
    <property type="protein sequence ID" value="FBpp0083675"/>
    <property type="gene ID" value="FBgn0038984"/>
</dbReference>
<dbReference type="EnsemblMetazoa" id="FBtr0084283">
    <molecule id="Q9VCY8-1"/>
    <property type="protein sequence ID" value="FBpp0083676"/>
    <property type="gene ID" value="FBgn0038984"/>
</dbReference>
<dbReference type="EnsemblMetazoa" id="FBtr0084284">
    <molecule id="Q9VCY8-2"/>
    <property type="protein sequence ID" value="FBpp0083677"/>
    <property type="gene ID" value="FBgn0038984"/>
</dbReference>
<dbReference type="EnsemblMetazoa" id="FBtr0308848">
    <molecule id="Q9VCY8-1"/>
    <property type="protein sequence ID" value="FBpp0301003"/>
    <property type="gene ID" value="FBgn0038984"/>
</dbReference>
<dbReference type="EnsemblMetazoa" id="FBtr0334561">
    <molecule id="Q9VCY8-1"/>
    <property type="protein sequence ID" value="FBpp0306628"/>
    <property type="gene ID" value="FBgn0038984"/>
</dbReference>
<dbReference type="GeneID" id="42656"/>
<dbReference type="KEGG" id="dme:Dmel_CG5315"/>
<dbReference type="UCSC" id="CG5315-RA">
    <molecule id="Q9VCY8-1"/>
    <property type="organism name" value="d. melanogaster"/>
</dbReference>
<dbReference type="AGR" id="FB:FBgn0038984"/>
<dbReference type="CTD" id="42656"/>
<dbReference type="FlyBase" id="FBgn0038984">
    <property type="gene designation" value="AdipoR"/>
</dbReference>
<dbReference type="VEuPathDB" id="VectorBase:FBgn0038984"/>
<dbReference type="eggNOG" id="KOG0748">
    <property type="taxonomic scope" value="Eukaryota"/>
</dbReference>
<dbReference type="GeneTree" id="ENSGT00940000170813"/>
<dbReference type="HOGENOM" id="CLU_023075_1_1_1"/>
<dbReference type="InParanoid" id="Q9VCY8"/>
<dbReference type="OMA" id="IGNACDY"/>
<dbReference type="OrthoDB" id="5585746at2759"/>
<dbReference type="PhylomeDB" id="Q9VCY8"/>
<dbReference type="BioGRID-ORCS" id="42656">
    <property type="hits" value="0 hits in 3 CRISPR screens"/>
</dbReference>
<dbReference type="ChiTaRS" id="AdipoR">
    <property type="organism name" value="fly"/>
</dbReference>
<dbReference type="GenomeRNAi" id="42656"/>
<dbReference type="PRO" id="PR:Q9VCY8"/>
<dbReference type="Proteomes" id="UP000000803">
    <property type="component" value="Chromosome 3R"/>
</dbReference>
<dbReference type="Bgee" id="FBgn0038984">
    <property type="expression patterns" value="Expressed in fat body cell in open tracheal system trachea and 270 other cell types or tissues"/>
</dbReference>
<dbReference type="ExpressionAtlas" id="Q9VCY8">
    <property type="expression patterns" value="baseline and differential"/>
</dbReference>
<dbReference type="GO" id="GO:0016020">
    <property type="term" value="C:membrane"/>
    <property type="evidence" value="ECO:0000255"/>
    <property type="project" value="FlyBase"/>
</dbReference>
<dbReference type="GO" id="GO:0005886">
    <property type="term" value="C:plasma membrane"/>
    <property type="evidence" value="ECO:0000318"/>
    <property type="project" value="GO_Central"/>
</dbReference>
<dbReference type="GO" id="GO:0046872">
    <property type="term" value="F:metal ion binding"/>
    <property type="evidence" value="ECO:0007669"/>
    <property type="project" value="UniProtKB-KW"/>
</dbReference>
<dbReference type="GO" id="GO:0016500">
    <property type="term" value="F:protein-hormone receptor activity"/>
    <property type="evidence" value="ECO:0000250"/>
    <property type="project" value="FlyBase"/>
</dbReference>
<dbReference type="GO" id="GO:0038023">
    <property type="term" value="F:signaling receptor activity"/>
    <property type="evidence" value="ECO:0000318"/>
    <property type="project" value="GO_Central"/>
</dbReference>
<dbReference type="GO" id="GO:0033211">
    <property type="term" value="P:adiponectin-activated signaling pathway"/>
    <property type="evidence" value="ECO:0000318"/>
    <property type="project" value="GO_Central"/>
</dbReference>
<dbReference type="GO" id="GO:0019395">
    <property type="term" value="P:fatty acid oxidation"/>
    <property type="evidence" value="ECO:0000250"/>
    <property type="project" value="UniProtKB"/>
</dbReference>
<dbReference type="GO" id="GO:0036099">
    <property type="term" value="P:female germ-line stem cell population maintenance"/>
    <property type="evidence" value="ECO:0000315"/>
    <property type="project" value="FlyBase"/>
</dbReference>
<dbReference type="GO" id="GO:0042593">
    <property type="term" value="P:glucose homeostasis"/>
    <property type="evidence" value="ECO:0000315"/>
    <property type="project" value="FlyBase"/>
</dbReference>
<dbReference type="GO" id="GO:0009755">
    <property type="term" value="P:hormone-mediated signaling pathway"/>
    <property type="evidence" value="ECO:0000315"/>
    <property type="project" value="FlyBase"/>
</dbReference>
<dbReference type="GO" id="GO:0032024">
    <property type="term" value="P:positive regulation of insulin secretion"/>
    <property type="evidence" value="ECO:0000315"/>
    <property type="project" value="FlyBase"/>
</dbReference>
<dbReference type="GO" id="GO:0070328">
    <property type="term" value="P:triglyceride homeostasis"/>
    <property type="evidence" value="ECO:0000315"/>
    <property type="project" value="FlyBase"/>
</dbReference>
<dbReference type="InterPro" id="IPR004254">
    <property type="entry name" value="AdipoR/HlyIII-related"/>
</dbReference>
<dbReference type="PANTHER" id="PTHR20855:SF52">
    <property type="entry name" value="ADIPONECTIN RECEPTOR PROTEIN"/>
    <property type="match status" value="1"/>
</dbReference>
<dbReference type="PANTHER" id="PTHR20855">
    <property type="entry name" value="ADIPOR/PROGESTIN RECEPTOR-RELATED"/>
    <property type="match status" value="1"/>
</dbReference>
<dbReference type="Pfam" id="PF03006">
    <property type="entry name" value="HlyIII"/>
    <property type="match status" value="1"/>
</dbReference>
<sequence>MDSATNLLEQQGSAADVSGGSHPAEVEVTTQARATFGMDAEGHATGEAVTTTTATLRREGSDEDIFEQVQMILRKRRGWGPEDSLSPNDLDILEYDDELVEEDDAGCPLPSTPEDTQLIEAEMTEVLKAGVLSDEIDLGALAHNAAEQAEEFVRKVWEASWKVCHYKNLPKWLQDNDFLHRGHRPPLPSFRACFKSIFRVHTETGNIWTHLLGCIAFIGVALYFISRPSVEIQTQEKIVFGAFFIGAIVCLGFSFAFHTLSCHSVEMGRLFSKLDYCGIALLIMGSFVPWLYYGFYCHYQPKVIYLSVVSILGILSIVVSLWDKFSEPALRPLRAGVFMSFGLSGVIPAIHYSIMEGWFSQMSRASLGWLILMGLLYILGALLYALRVPERWFPGKFDIWGQSHQIFHILVIAAAFVHYHGISEMAMYRVMYSECTVPIEPITF</sequence>
<protein>
    <recommendedName>
        <fullName>Adiponectin receptor protein</fullName>
    </recommendedName>
</protein>
<accession>Q9VCY8</accession>
<accession>Q9VCY9</accession>
<comment type="function">
    <text evidence="4">Adiponectin receptor. In insulin-producing cells, regulates insulin secretion and controls glucose and lipid metabolism.</text>
</comment>
<comment type="subcellular location">
    <subcellularLocation>
        <location evidence="6">Cell membrane</location>
        <topology evidence="6">Multi-pass membrane protein</topology>
    </subcellularLocation>
</comment>
<comment type="alternative products">
    <event type="alternative splicing"/>
    <isoform>
        <id>Q9VCY8-1</id>
        <name>1</name>
        <sequence type="displayed"/>
    </isoform>
    <isoform>
        <id>Q9VCY8-2</id>
        <name>2</name>
        <sequence type="described" ref="VSP_008889 VSP_008890"/>
    </isoform>
</comment>
<comment type="tissue specificity">
    <text evidence="4">In larval and adult brain, expressed in insulin-producing cells and in neurons of the subesophageal region. Also expressed in lateral neurons of the adult brain (at protein level). In third instar larvae, expressed in central nervous system (CNS), imaginal disk, salivary gland, fat body, gut and malphigian tubules.</text>
</comment>
<comment type="developmental stage">
    <text evidence="4">Expressed throughout development and in adult.</text>
</comment>
<comment type="similarity">
    <text evidence="6">Belongs to the ADIPOR family.</text>
</comment>
<keyword id="KW-0025">Alternative splicing</keyword>
<keyword id="KW-1003">Cell membrane</keyword>
<keyword id="KW-0276">Fatty acid metabolism</keyword>
<keyword id="KW-0443">Lipid metabolism</keyword>
<keyword id="KW-0472">Membrane</keyword>
<keyword id="KW-0479">Metal-binding</keyword>
<keyword id="KW-0675">Receptor</keyword>
<keyword id="KW-1185">Reference proteome</keyword>
<keyword id="KW-0812">Transmembrane</keyword>
<keyword id="KW-1133">Transmembrane helix</keyword>
<keyword id="KW-0862">Zinc</keyword>
<organism>
    <name type="scientific">Drosophila melanogaster</name>
    <name type="common">Fruit fly</name>
    <dbReference type="NCBI Taxonomy" id="7227"/>
    <lineage>
        <taxon>Eukaryota</taxon>
        <taxon>Metazoa</taxon>
        <taxon>Ecdysozoa</taxon>
        <taxon>Arthropoda</taxon>
        <taxon>Hexapoda</taxon>
        <taxon>Insecta</taxon>
        <taxon>Pterygota</taxon>
        <taxon>Neoptera</taxon>
        <taxon>Endopterygota</taxon>
        <taxon>Diptera</taxon>
        <taxon>Brachycera</taxon>
        <taxon>Muscomorpha</taxon>
        <taxon>Ephydroidea</taxon>
        <taxon>Drosophilidae</taxon>
        <taxon>Drosophila</taxon>
        <taxon>Sophophora</taxon>
    </lineage>
</organism>
<evidence type="ECO:0000250" key="1">
    <source>
        <dbReference type="UniProtKB" id="Q86V24"/>
    </source>
</evidence>
<evidence type="ECO:0000255" key="2"/>
<evidence type="ECO:0000256" key="3">
    <source>
        <dbReference type="SAM" id="MobiDB-lite"/>
    </source>
</evidence>
<evidence type="ECO:0000269" key="4">
    <source>
    </source>
</evidence>
<evidence type="ECO:0000303" key="5">
    <source>
    </source>
</evidence>
<evidence type="ECO:0000305" key="6"/>
<feature type="chain" id="PRO_0000218832" description="Adiponectin receptor protein">
    <location>
        <begin position="1"/>
        <end position="444"/>
    </location>
</feature>
<feature type="topological domain" description="Cytoplasmic" evidence="2">
    <location>
        <begin position="1"/>
        <end position="204"/>
    </location>
</feature>
<feature type="transmembrane region" description="Helical; Name=1" evidence="2">
    <location>
        <begin position="205"/>
        <end position="225"/>
    </location>
</feature>
<feature type="topological domain" description="Extracellular" evidence="2">
    <location>
        <begin position="226"/>
        <end position="237"/>
    </location>
</feature>
<feature type="transmembrane region" description="Helical; Name=2" evidence="2">
    <location>
        <begin position="238"/>
        <end position="258"/>
    </location>
</feature>
<feature type="topological domain" description="Cytoplasmic" evidence="2">
    <location>
        <begin position="259"/>
        <end position="276"/>
    </location>
</feature>
<feature type="transmembrane region" description="Helical; Name=3" evidence="2">
    <location>
        <begin position="277"/>
        <end position="297"/>
    </location>
</feature>
<feature type="topological domain" description="Extracellular" evidence="2">
    <location>
        <begin position="298"/>
        <end position="302"/>
    </location>
</feature>
<feature type="transmembrane region" description="Helical; Name=4" evidence="2">
    <location>
        <begin position="303"/>
        <end position="323"/>
    </location>
</feature>
<feature type="topological domain" description="Cytoplasmic" evidence="2">
    <location>
        <begin position="324"/>
        <end position="334"/>
    </location>
</feature>
<feature type="transmembrane region" description="Helical; Name=5" evidence="2">
    <location>
        <begin position="335"/>
        <end position="355"/>
    </location>
</feature>
<feature type="topological domain" description="Extracellular" evidence="2">
    <location>
        <begin position="356"/>
        <end position="365"/>
    </location>
</feature>
<feature type="transmembrane region" description="Helical; Name=6" evidence="2">
    <location>
        <begin position="366"/>
        <end position="386"/>
    </location>
</feature>
<feature type="topological domain" description="Cytoplasmic" evidence="2">
    <location>
        <begin position="387"/>
        <end position="405"/>
    </location>
</feature>
<feature type="transmembrane region" description="Helical; Name=7" evidence="2">
    <location>
        <begin position="406"/>
        <end position="426"/>
    </location>
</feature>
<feature type="topological domain" description="Extracellular" evidence="2">
    <location>
        <begin position="427"/>
        <end position="444"/>
    </location>
</feature>
<feature type="region of interest" description="Disordered" evidence="3">
    <location>
        <begin position="1"/>
        <end position="24"/>
    </location>
</feature>
<feature type="compositionally biased region" description="Polar residues" evidence="3">
    <location>
        <begin position="1"/>
        <end position="13"/>
    </location>
</feature>
<feature type="binding site" evidence="1">
    <location>
        <position position="258"/>
    </location>
    <ligand>
        <name>Zn(2+)</name>
        <dbReference type="ChEBI" id="CHEBI:29105"/>
    </ligand>
</feature>
<feature type="binding site" evidence="1">
    <location>
        <position position="404"/>
    </location>
    <ligand>
        <name>Zn(2+)</name>
        <dbReference type="ChEBI" id="CHEBI:29105"/>
    </ligand>
</feature>
<feature type="binding site" evidence="1">
    <location>
        <position position="408"/>
    </location>
    <ligand>
        <name>Zn(2+)</name>
        <dbReference type="ChEBI" id="CHEBI:29105"/>
    </ligand>
</feature>
<feature type="splice variant" id="VSP_008889" description="In isoform 2." evidence="5">
    <location>
        <begin position="1"/>
        <end position="82"/>
    </location>
</feature>
<feature type="splice variant" id="VSP_008890" description="In isoform 2." evidence="5">
    <original>DSLSPNDLDILEYDDELVEEDDAGCPLPSTPEDTQLIEAE</original>
    <variation>MQTQPEVIVRVNPDLEPDLSQETYRTQNPDTVKEQAENAV</variation>
    <location>
        <begin position="83"/>
        <end position="122"/>
    </location>
</feature>